<accession>A8AAJ8</accession>
<keyword id="KW-0963">Cytoplasm</keyword>
<keyword id="KW-1185">Reference proteome</keyword>
<keyword id="KW-0687">Ribonucleoprotein</keyword>
<keyword id="KW-0694">RNA-binding</keyword>
<keyword id="KW-0733">Signal recognition particle</keyword>
<comment type="function">
    <text evidence="1">Involved in targeting and insertion of nascent membrane proteins into the cytoplasmic membrane. Binds directly to 7S RNA and mediates binding of the 54 kDa subunit of the SRP.</text>
</comment>
<comment type="subunit">
    <text evidence="1">Part of the signal recognition particle protein translocation system, which is composed of SRP and FtsY. Archaeal SRP consists of a 7S RNA molecule of 300 nucleotides and two protein subunits: SRP54 and SRP19.</text>
</comment>
<comment type="subcellular location">
    <subcellularLocation>
        <location evidence="1">Cytoplasm</location>
    </subcellularLocation>
</comment>
<comment type="similarity">
    <text evidence="1">Belongs to the SRP19 family.</text>
</comment>
<dbReference type="EMBL" id="CP000816">
    <property type="protein sequence ID" value="ABU81950.1"/>
    <property type="molecule type" value="Genomic_DNA"/>
</dbReference>
<dbReference type="RefSeq" id="WP_012122914.1">
    <property type="nucleotide sequence ID" value="NC_009776.1"/>
</dbReference>
<dbReference type="SMR" id="A8AAJ8"/>
<dbReference type="STRING" id="453591.Igni_0768"/>
<dbReference type="GeneID" id="5561787"/>
<dbReference type="KEGG" id="iho:Igni_0768"/>
<dbReference type="eggNOG" id="arCOG01217">
    <property type="taxonomic scope" value="Archaea"/>
</dbReference>
<dbReference type="HOGENOM" id="CLU_169299_1_0_2"/>
<dbReference type="OrthoDB" id="56356at2157"/>
<dbReference type="PhylomeDB" id="A8AAJ8"/>
<dbReference type="Proteomes" id="UP000000262">
    <property type="component" value="Chromosome"/>
</dbReference>
<dbReference type="GO" id="GO:0048500">
    <property type="term" value="C:signal recognition particle"/>
    <property type="evidence" value="ECO:0007669"/>
    <property type="project" value="UniProtKB-UniRule"/>
</dbReference>
<dbReference type="GO" id="GO:0008312">
    <property type="term" value="F:7S RNA binding"/>
    <property type="evidence" value="ECO:0007669"/>
    <property type="project" value="UniProtKB-UniRule"/>
</dbReference>
<dbReference type="GO" id="GO:0006617">
    <property type="term" value="P:SRP-dependent cotranslational protein targeting to membrane, signal sequence recognition"/>
    <property type="evidence" value="ECO:0007669"/>
    <property type="project" value="TreeGrafter"/>
</dbReference>
<dbReference type="Gene3D" id="3.30.56.30">
    <property type="entry name" value="Signal recognition particle, SRP19-like subunit"/>
    <property type="match status" value="1"/>
</dbReference>
<dbReference type="HAMAP" id="MF_00305">
    <property type="entry name" value="SRP19"/>
    <property type="match status" value="1"/>
</dbReference>
<dbReference type="InterPro" id="IPR002778">
    <property type="entry name" value="Signal_recog_particle_SRP19"/>
</dbReference>
<dbReference type="InterPro" id="IPR036521">
    <property type="entry name" value="SRP19-like_sf"/>
</dbReference>
<dbReference type="InterPro" id="IPR022938">
    <property type="entry name" value="SRP19_arc-type"/>
</dbReference>
<dbReference type="PANTHER" id="PTHR17453">
    <property type="entry name" value="SIGNAL RECOGNITION PARTICLE 19 KD PROTEIN"/>
    <property type="match status" value="1"/>
</dbReference>
<dbReference type="PANTHER" id="PTHR17453:SF0">
    <property type="entry name" value="SIGNAL RECOGNITION PARTICLE 19 KDA PROTEIN"/>
    <property type="match status" value="1"/>
</dbReference>
<dbReference type="Pfam" id="PF01922">
    <property type="entry name" value="SRP19"/>
    <property type="match status" value="1"/>
</dbReference>
<dbReference type="SUPFAM" id="SSF69695">
    <property type="entry name" value="SRP19"/>
    <property type="match status" value="1"/>
</dbReference>
<organism>
    <name type="scientific">Ignicoccus hospitalis (strain KIN4/I / DSM 18386 / JCM 14125)</name>
    <dbReference type="NCBI Taxonomy" id="453591"/>
    <lineage>
        <taxon>Archaea</taxon>
        <taxon>Thermoproteota</taxon>
        <taxon>Thermoprotei</taxon>
        <taxon>Desulfurococcales</taxon>
        <taxon>Desulfurococcaceae</taxon>
        <taxon>Ignicoccus</taxon>
    </lineage>
</organism>
<name>SRP19_IGNH4</name>
<protein>
    <recommendedName>
        <fullName evidence="1">Signal recognition particle 19 kDa protein</fullName>
        <shortName evidence="1">SRP19</shortName>
    </recommendedName>
</protein>
<reference key="1">
    <citation type="journal article" date="2008" name="Genome Biol.">
        <title>A genomic analysis of the archaeal system Ignicoccus hospitalis-Nanoarchaeum equitans.</title>
        <authorList>
            <person name="Podar M."/>
            <person name="Anderson I."/>
            <person name="Makarova K.S."/>
            <person name="Elkins J.G."/>
            <person name="Ivanova N."/>
            <person name="Wall M.A."/>
            <person name="Lykidis A."/>
            <person name="Mavromatis K."/>
            <person name="Sun H."/>
            <person name="Hudson M.E."/>
            <person name="Chen W."/>
            <person name="Deciu C."/>
            <person name="Hutchison D."/>
            <person name="Eads J.R."/>
            <person name="Anderson A."/>
            <person name="Fernandes F."/>
            <person name="Szeto E."/>
            <person name="Lapidus A."/>
            <person name="Kyrpides N.C."/>
            <person name="Saier M.H. Jr."/>
            <person name="Richardson P.M."/>
            <person name="Rachel R."/>
            <person name="Huber H."/>
            <person name="Eisen J.A."/>
            <person name="Koonin E.V."/>
            <person name="Keller M."/>
            <person name="Stetter K.O."/>
        </authorList>
    </citation>
    <scope>NUCLEOTIDE SEQUENCE [LARGE SCALE GENOMIC DNA]</scope>
    <source>
        <strain>KIN4/I / DSM 18386 / JCM 14125</strain>
    </source>
</reference>
<gene>
    <name evidence="1" type="primary">srp19</name>
    <name type="ordered locus">Igni_0768</name>
</gene>
<proteinExistence type="inferred from homology"/>
<evidence type="ECO:0000255" key="1">
    <source>
        <dbReference type="HAMAP-Rule" id="MF_00305"/>
    </source>
</evidence>
<feature type="chain" id="PRO_0000322223" description="Signal recognition particle 19 kDa protein">
    <location>
        <begin position="1"/>
        <end position="99"/>
    </location>
</feature>
<sequence length="99" mass="11626">MTLKKYKGKYVILWPQYFDSSLSRKEGRRVPRELAVARPSQKELLEVAAALGLEAKPLEGKYPREWWNKEGPVLVEKRGSKREVITLLAKELRRRRYGK</sequence>